<comment type="function">
    <text evidence="1">Catalyzes the hydrolysis of N-succinyl-L,L-diaminopimelic acid (SDAP), forming succinate and LL-2,6-diaminopimelate (DAP), an intermediate involved in the bacterial biosynthesis of lysine and meso-diaminopimelic acid, an essential component of bacterial cell walls.</text>
</comment>
<comment type="catalytic activity">
    <reaction evidence="1">
        <text>N-succinyl-(2S,6S)-2,6-diaminopimelate + H2O = (2S,6S)-2,6-diaminopimelate + succinate</text>
        <dbReference type="Rhea" id="RHEA:22608"/>
        <dbReference type="ChEBI" id="CHEBI:15377"/>
        <dbReference type="ChEBI" id="CHEBI:30031"/>
        <dbReference type="ChEBI" id="CHEBI:57609"/>
        <dbReference type="ChEBI" id="CHEBI:58087"/>
        <dbReference type="EC" id="3.5.1.18"/>
    </reaction>
</comment>
<comment type="cofactor">
    <cofactor evidence="1">
        <name>Zn(2+)</name>
        <dbReference type="ChEBI" id="CHEBI:29105"/>
    </cofactor>
    <cofactor evidence="1">
        <name>Co(2+)</name>
        <dbReference type="ChEBI" id="CHEBI:48828"/>
    </cofactor>
    <text evidence="1">Binds 2 Zn(2+) or Co(2+) ions per subunit.</text>
</comment>
<comment type="pathway">
    <text evidence="1">Amino-acid biosynthesis; L-lysine biosynthesis via DAP pathway; LL-2,6-diaminopimelate from (S)-tetrahydrodipicolinate (succinylase route): step 3/3.</text>
</comment>
<comment type="subunit">
    <text evidence="1">Homodimer.</text>
</comment>
<comment type="similarity">
    <text evidence="1">Belongs to the peptidase M20A family. DapE subfamily.</text>
</comment>
<dbReference type="EC" id="3.5.1.18" evidence="1"/>
<dbReference type="EMBL" id="BA000031">
    <property type="protein sequence ID" value="BAC60532.1"/>
    <property type="molecule type" value="Genomic_DNA"/>
</dbReference>
<dbReference type="RefSeq" id="NP_798648.1">
    <property type="nucleotide sequence ID" value="NC_004603.1"/>
</dbReference>
<dbReference type="RefSeq" id="WP_005457682.1">
    <property type="nucleotide sequence ID" value="NC_004603.1"/>
</dbReference>
<dbReference type="SMR" id="Q87MI6"/>
<dbReference type="GeneID" id="1189782"/>
<dbReference type="KEGG" id="vpa:VP2269"/>
<dbReference type="PATRIC" id="fig|223926.6.peg.2171"/>
<dbReference type="eggNOG" id="COG0624">
    <property type="taxonomic scope" value="Bacteria"/>
</dbReference>
<dbReference type="HOGENOM" id="CLU_021802_4_0_6"/>
<dbReference type="UniPathway" id="UPA00034">
    <property type="reaction ID" value="UER00021"/>
</dbReference>
<dbReference type="Proteomes" id="UP000002493">
    <property type="component" value="Chromosome 1"/>
</dbReference>
<dbReference type="GO" id="GO:0008777">
    <property type="term" value="F:acetylornithine deacetylase activity"/>
    <property type="evidence" value="ECO:0007669"/>
    <property type="project" value="TreeGrafter"/>
</dbReference>
<dbReference type="GO" id="GO:0050897">
    <property type="term" value="F:cobalt ion binding"/>
    <property type="evidence" value="ECO:0007669"/>
    <property type="project" value="UniProtKB-UniRule"/>
</dbReference>
<dbReference type="GO" id="GO:0009014">
    <property type="term" value="F:succinyl-diaminopimelate desuccinylase activity"/>
    <property type="evidence" value="ECO:0007669"/>
    <property type="project" value="UniProtKB-UniRule"/>
</dbReference>
<dbReference type="GO" id="GO:0008270">
    <property type="term" value="F:zinc ion binding"/>
    <property type="evidence" value="ECO:0007669"/>
    <property type="project" value="UniProtKB-UniRule"/>
</dbReference>
<dbReference type="GO" id="GO:0019877">
    <property type="term" value="P:diaminopimelate biosynthetic process"/>
    <property type="evidence" value="ECO:0007669"/>
    <property type="project" value="UniProtKB-UniRule"/>
</dbReference>
<dbReference type="GO" id="GO:0006526">
    <property type="term" value="P:L-arginine biosynthetic process"/>
    <property type="evidence" value="ECO:0007669"/>
    <property type="project" value="TreeGrafter"/>
</dbReference>
<dbReference type="GO" id="GO:0009089">
    <property type="term" value="P:lysine biosynthetic process via diaminopimelate"/>
    <property type="evidence" value="ECO:0007669"/>
    <property type="project" value="UniProtKB-UniRule"/>
</dbReference>
<dbReference type="CDD" id="cd03891">
    <property type="entry name" value="M20_DapE_proteobac"/>
    <property type="match status" value="1"/>
</dbReference>
<dbReference type="FunFam" id="3.30.70.360:FF:000011">
    <property type="entry name" value="Succinyl-diaminopimelate desuccinylase"/>
    <property type="match status" value="1"/>
</dbReference>
<dbReference type="FunFam" id="3.40.630.10:FF:000005">
    <property type="entry name" value="Succinyl-diaminopimelate desuccinylase"/>
    <property type="match status" value="1"/>
</dbReference>
<dbReference type="Gene3D" id="3.40.630.10">
    <property type="entry name" value="Zn peptidases"/>
    <property type="match status" value="2"/>
</dbReference>
<dbReference type="HAMAP" id="MF_01690">
    <property type="entry name" value="DapE"/>
    <property type="match status" value="1"/>
</dbReference>
<dbReference type="InterPro" id="IPR001261">
    <property type="entry name" value="ArgE/DapE_CS"/>
</dbReference>
<dbReference type="InterPro" id="IPR036264">
    <property type="entry name" value="Bact_exopeptidase_dim_dom"/>
</dbReference>
<dbReference type="InterPro" id="IPR005941">
    <property type="entry name" value="DapE_proteobac"/>
</dbReference>
<dbReference type="InterPro" id="IPR002933">
    <property type="entry name" value="Peptidase_M20"/>
</dbReference>
<dbReference type="InterPro" id="IPR011650">
    <property type="entry name" value="Peptidase_M20_dimer"/>
</dbReference>
<dbReference type="InterPro" id="IPR050072">
    <property type="entry name" value="Peptidase_M20A"/>
</dbReference>
<dbReference type="NCBIfam" id="TIGR01246">
    <property type="entry name" value="dapE_proteo"/>
    <property type="match status" value="1"/>
</dbReference>
<dbReference type="NCBIfam" id="NF009557">
    <property type="entry name" value="PRK13009.1"/>
    <property type="match status" value="1"/>
</dbReference>
<dbReference type="PANTHER" id="PTHR43808">
    <property type="entry name" value="ACETYLORNITHINE DEACETYLASE"/>
    <property type="match status" value="1"/>
</dbReference>
<dbReference type="PANTHER" id="PTHR43808:SF31">
    <property type="entry name" value="N-ACETYL-L-CITRULLINE DEACETYLASE"/>
    <property type="match status" value="1"/>
</dbReference>
<dbReference type="Pfam" id="PF07687">
    <property type="entry name" value="M20_dimer"/>
    <property type="match status" value="1"/>
</dbReference>
<dbReference type="Pfam" id="PF01546">
    <property type="entry name" value="Peptidase_M20"/>
    <property type="match status" value="1"/>
</dbReference>
<dbReference type="SUPFAM" id="SSF55031">
    <property type="entry name" value="Bacterial exopeptidase dimerisation domain"/>
    <property type="match status" value="1"/>
</dbReference>
<dbReference type="SUPFAM" id="SSF53187">
    <property type="entry name" value="Zn-dependent exopeptidases"/>
    <property type="match status" value="1"/>
</dbReference>
<dbReference type="PROSITE" id="PS00759">
    <property type="entry name" value="ARGE_DAPE_CPG2_2"/>
    <property type="match status" value="1"/>
</dbReference>
<sequence>MTDSPVLALAKDLISRQSVTPEDAGCQDLMIERLKALGFEIEVMVFEDTTNFWARRGNEAPLFAFAGHTDVVPAGKLEQWDTPPFEPTIIDGYLHGRGAADMKGSLAAMVVAVERFIAEHPDHKGSIGFLITSDEEGPFINGTVRVVEALMERGENIDMCIVGEPSSTEIVGDVVKNGRRGSITGDLTVKGTQGHVAYPHLANNPVHASLLAIHELATTEWDKGNDYFPPTSFQIPNVSAGTGASNVIPGEFNVQFNLRFSTELNNDTIVQRVTETLDKHDLNYDLHWTFNGDPFLTDTGALLDAVVAAVAEVNNTKPALLTTGGTSDGRFIARMGGQVVELGPVNATIHKVNECVKVDDLEKLTDMYENTLKHLLAK</sequence>
<organism>
    <name type="scientific">Vibrio parahaemolyticus serotype O3:K6 (strain RIMD 2210633)</name>
    <dbReference type="NCBI Taxonomy" id="223926"/>
    <lineage>
        <taxon>Bacteria</taxon>
        <taxon>Pseudomonadati</taxon>
        <taxon>Pseudomonadota</taxon>
        <taxon>Gammaproteobacteria</taxon>
        <taxon>Vibrionales</taxon>
        <taxon>Vibrionaceae</taxon>
        <taxon>Vibrio</taxon>
    </lineage>
</organism>
<protein>
    <recommendedName>
        <fullName evidence="1">Succinyl-diaminopimelate desuccinylase</fullName>
        <shortName evidence="1">SDAP desuccinylase</shortName>
        <ecNumber evidence="1">3.5.1.18</ecNumber>
    </recommendedName>
    <alternativeName>
        <fullName evidence="1">N-succinyl-LL-2,6-diaminoheptanedioate amidohydrolase</fullName>
    </alternativeName>
</protein>
<gene>
    <name evidence="1" type="primary">dapE</name>
    <name type="ordered locus">VP2269</name>
</gene>
<evidence type="ECO:0000255" key="1">
    <source>
        <dbReference type="HAMAP-Rule" id="MF_01690"/>
    </source>
</evidence>
<keyword id="KW-0028">Amino-acid biosynthesis</keyword>
<keyword id="KW-0170">Cobalt</keyword>
<keyword id="KW-0220">Diaminopimelate biosynthesis</keyword>
<keyword id="KW-0378">Hydrolase</keyword>
<keyword id="KW-0457">Lysine biosynthesis</keyword>
<keyword id="KW-0479">Metal-binding</keyword>
<keyword id="KW-0862">Zinc</keyword>
<proteinExistence type="inferred from homology"/>
<name>DAPE_VIBPA</name>
<accession>Q87MI6</accession>
<reference key="1">
    <citation type="journal article" date="2003" name="Lancet">
        <title>Genome sequence of Vibrio parahaemolyticus: a pathogenic mechanism distinct from that of V. cholerae.</title>
        <authorList>
            <person name="Makino K."/>
            <person name="Oshima K."/>
            <person name="Kurokawa K."/>
            <person name="Yokoyama K."/>
            <person name="Uda T."/>
            <person name="Tagomori K."/>
            <person name="Iijima Y."/>
            <person name="Najima M."/>
            <person name="Nakano M."/>
            <person name="Yamashita A."/>
            <person name="Kubota Y."/>
            <person name="Kimura S."/>
            <person name="Yasunaga T."/>
            <person name="Honda T."/>
            <person name="Shinagawa H."/>
            <person name="Hattori M."/>
            <person name="Iida T."/>
        </authorList>
    </citation>
    <scope>NUCLEOTIDE SEQUENCE [LARGE SCALE GENOMIC DNA]</scope>
    <source>
        <strain>RIMD 2210633</strain>
    </source>
</reference>
<feature type="chain" id="PRO_0000375771" description="Succinyl-diaminopimelate desuccinylase">
    <location>
        <begin position="1"/>
        <end position="378"/>
    </location>
</feature>
<feature type="active site" evidence="1">
    <location>
        <position position="70"/>
    </location>
</feature>
<feature type="active site" description="Proton acceptor" evidence="1">
    <location>
        <position position="135"/>
    </location>
</feature>
<feature type="binding site" evidence="1">
    <location>
        <position position="68"/>
    </location>
    <ligand>
        <name>Zn(2+)</name>
        <dbReference type="ChEBI" id="CHEBI:29105"/>
        <label>1</label>
    </ligand>
</feature>
<feature type="binding site" evidence="1">
    <location>
        <position position="101"/>
    </location>
    <ligand>
        <name>Zn(2+)</name>
        <dbReference type="ChEBI" id="CHEBI:29105"/>
        <label>1</label>
    </ligand>
</feature>
<feature type="binding site" evidence="1">
    <location>
        <position position="101"/>
    </location>
    <ligand>
        <name>Zn(2+)</name>
        <dbReference type="ChEBI" id="CHEBI:29105"/>
        <label>2</label>
    </ligand>
</feature>
<feature type="binding site" evidence="1">
    <location>
        <position position="136"/>
    </location>
    <ligand>
        <name>Zn(2+)</name>
        <dbReference type="ChEBI" id="CHEBI:29105"/>
        <label>2</label>
    </ligand>
</feature>
<feature type="binding site" evidence="1">
    <location>
        <position position="164"/>
    </location>
    <ligand>
        <name>Zn(2+)</name>
        <dbReference type="ChEBI" id="CHEBI:29105"/>
        <label>1</label>
    </ligand>
</feature>
<feature type="binding site" evidence="1">
    <location>
        <position position="350"/>
    </location>
    <ligand>
        <name>Zn(2+)</name>
        <dbReference type="ChEBI" id="CHEBI:29105"/>
        <label>2</label>
    </ligand>
</feature>